<gene>
    <name type="primary">DEFB11</name>
    <name type="synonym">BNBD11</name>
</gene>
<keyword id="KW-0044">Antibiotic</keyword>
<keyword id="KW-0929">Antimicrobial</keyword>
<keyword id="KW-0211">Defensin</keyword>
<keyword id="KW-0903">Direct protein sequencing</keyword>
<keyword id="KW-1015">Disulfide bond</keyword>
<keyword id="KW-1185">Reference proteome</keyword>
<keyword id="KW-0964">Secreted</keyword>
<keyword id="KW-0732">Signal</keyword>
<protein>
    <recommendedName>
        <fullName>Beta-defensin 11</fullName>
    </recommendedName>
    <alternativeName>
        <fullName>BNBD-11</fullName>
    </alternativeName>
    <alternativeName>
        <fullName>BNDB-11</fullName>
    </alternativeName>
    <alternativeName>
        <fullName>Neutrophil beta-defensin 11</fullName>
    </alternativeName>
</protein>
<feature type="signal peptide" evidence="2">
    <location>
        <begin position="1"/>
        <end position="22"/>
    </location>
</feature>
<feature type="peptide" id="PRO_0000044726" description="Beta-defensin 11">
    <location>
        <begin position="23"/>
        <end position="60"/>
    </location>
</feature>
<feature type="disulfide bond" evidence="1">
    <location>
        <begin position="27"/>
        <end position="56"/>
    </location>
</feature>
<feature type="disulfide bond" evidence="1">
    <location>
        <begin position="34"/>
        <end position="49"/>
    </location>
</feature>
<feature type="disulfide bond" evidence="1">
    <location>
        <begin position="39"/>
        <end position="57"/>
    </location>
</feature>
<comment type="function">
    <text>Has bactericidal activity. Active against E.coli ML35 and S.aureus 502A.</text>
</comment>
<comment type="subcellular location">
    <subcellularLocation>
        <location>Secreted</location>
    </subcellularLocation>
</comment>
<comment type="tissue specificity">
    <text>Neutrophilic granules.</text>
</comment>
<comment type="similarity">
    <text evidence="3">Belongs to the beta-defensin family.</text>
</comment>
<dbReference type="EMBL" id="AJ567992">
    <property type="protein sequence ID" value="CAD99423.1"/>
    <property type="molecule type" value="Genomic_DNA"/>
</dbReference>
<dbReference type="EMBL" id="AJ567993">
    <property type="protein sequence ID" value="CAD99423.1"/>
    <property type="status" value="JOINED"/>
    <property type="molecule type" value="Genomic_DNA"/>
</dbReference>
<dbReference type="PIR" id="B47753">
    <property type="entry name" value="B47753"/>
</dbReference>
<dbReference type="SMR" id="P46169"/>
<dbReference type="FunCoup" id="P46169">
    <property type="interactions" value="28"/>
</dbReference>
<dbReference type="STRING" id="9913.ENSBTAP00000070487"/>
<dbReference type="VEuPathDB" id="HostDB:ENSBTAG00000050630"/>
<dbReference type="InParanoid" id="P46169"/>
<dbReference type="Proteomes" id="UP000009136">
    <property type="component" value="Chromosome 27"/>
</dbReference>
<dbReference type="Bgee" id="ENSBTAG00000050630">
    <property type="expression patterns" value="Expressed in thymus and 71 other cell types or tissues"/>
</dbReference>
<dbReference type="GO" id="GO:0005615">
    <property type="term" value="C:extracellular space"/>
    <property type="evidence" value="ECO:0000318"/>
    <property type="project" value="GO_Central"/>
</dbReference>
<dbReference type="GO" id="GO:0031731">
    <property type="term" value="F:CCR6 chemokine receptor binding"/>
    <property type="evidence" value="ECO:0000318"/>
    <property type="project" value="GO_Central"/>
</dbReference>
<dbReference type="GO" id="GO:0042056">
    <property type="term" value="F:chemoattractant activity"/>
    <property type="evidence" value="ECO:0000318"/>
    <property type="project" value="GO_Central"/>
</dbReference>
<dbReference type="GO" id="GO:0060326">
    <property type="term" value="P:cell chemotaxis"/>
    <property type="evidence" value="ECO:0000318"/>
    <property type="project" value="GO_Central"/>
</dbReference>
<dbReference type="GO" id="GO:0042742">
    <property type="term" value="P:defense response to bacterium"/>
    <property type="evidence" value="ECO:0000318"/>
    <property type="project" value="GO_Central"/>
</dbReference>
<dbReference type="FunFam" id="3.10.360.10:FF:000001">
    <property type="entry name" value="Beta-defensin 1"/>
    <property type="match status" value="1"/>
</dbReference>
<dbReference type="Gene3D" id="3.10.360.10">
    <property type="entry name" value="Antimicrobial Peptide, Beta-defensin 2, Chain A"/>
    <property type="match status" value="1"/>
</dbReference>
<dbReference type="InterPro" id="IPR006080">
    <property type="entry name" value="Beta/alpha-defensin_C"/>
</dbReference>
<dbReference type="InterPro" id="IPR001855">
    <property type="entry name" value="Defensin_beta-like"/>
</dbReference>
<dbReference type="PANTHER" id="PTHR20515">
    <property type="entry name" value="BETA-DEFENSIN"/>
    <property type="match status" value="1"/>
</dbReference>
<dbReference type="PANTHER" id="PTHR20515:SF2">
    <property type="entry name" value="DEFENSIN BETA 4A"/>
    <property type="match status" value="1"/>
</dbReference>
<dbReference type="Pfam" id="PF00711">
    <property type="entry name" value="Defensin_beta"/>
    <property type="match status" value="1"/>
</dbReference>
<dbReference type="SMART" id="SM00048">
    <property type="entry name" value="DEFSN"/>
    <property type="match status" value="1"/>
</dbReference>
<dbReference type="SUPFAM" id="SSF57392">
    <property type="entry name" value="Defensin-like"/>
    <property type="match status" value="1"/>
</dbReference>
<sequence>MRLHHLLLALLFLVLSAGSGISGPLSCRRNGGVCIPIRCPGPMRQIGTCFGRPVKCCRSW</sequence>
<evidence type="ECO:0000250" key="1"/>
<evidence type="ECO:0000269" key="2">
    <source>
    </source>
</evidence>
<evidence type="ECO:0000305" key="3"/>
<proteinExistence type="evidence at protein level"/>
<name>DFB11_BOVIN</name>
<organism>
    <name type="scientific">Bos taurus</name>
    <name type="common">Bovine</name>
    <dbReference type="NCBI Taxonomy" id="9913"/>
    <lineage>
        <taxon>Eukaryota</taxon>
        <taxon>Metazoa</taxon>
        <taxon>Chordata</taxon>
        <taxon>Craniata</taxon>
        <taxon>Vertebrata</taxon>
        <taxon>Euteleostomi</taxon>
        <taxon>Mammalia</taxon>
        <taxon>Eutheria</taxon>
        <taxon>Laurasiatheria</taxon>
        <taxon>Artiodactyla</taxon>
        <taxon>Ruminantia</taxon>
        <taxon>Pecora</taxon>
        <taxon>Bovidae</taxon>
        <taxon>Bovinae</taxon>
        <taxon>Bos</taxon>
    </lineage>
</organism>
<reference key="1">
    <citation type="journal article" date="2004" name="Mamm. Genome">
        <title>Bovine beta-defensins: identification and characterization of novel bovine beta-defensin genes and their expression in mammary gland tissue.</title>
        <authorList>
            <person name="Roosen S."/>
            <person name="Exner K."/>
            <person name="Paul S."/>
            <person name="Schroder J.M."/>
            <person name="Kalm E."/>
            <person name="Looft C."/>
        </authorList>
    </citation>
    <scope>NUCLEOTIDE SEQUENCE [GENOMIC DNA]</scope>
</reference>
<reference key="2">
    <citation type="journal article" date="1993" name="J. Biol. Chem.">
        <title>Purification, primary structures, and antibacterial activities of beta-defensins, a new family of antimicrobial peptides from bovine neutrophils.</title>
        <authorList>
            <person name="Selsted M.E."/>
            <person name="Tang Y.-Q."/>
            <person name="Morris W.L."/>
            <person name="McGuire P.A."/>
            <person name="Novotny M.J."/>
            <person name="Smith W."/>
            <person name="Henschen A.H."/>
            <person name="Cullor J.S."/>
        </authorList>
    </citation>
    <scope>PROTEIN SEQUENCE OF 23-60</scope>
    <source>
        <strain>Hereford</strain>
        <tissue>Neutrophil</tissue>
    </source>
</reference>
<accession>P46169</accession>
<accession>Q5W5G7</accession>